<protein>
    <recommendedName>
        <fullName>Non-virion protein</fullName>
    </recommendedName>
</protein>
<reference key="1">
    <citation type="journal article" date="1997" name="J. Gen. Virol.">
        <title>Distribution and variation of NV genes in fish rhabdoviruses.</title>
        <authorList>
            <person name="Kurath G."/>
            <person name="Higman K.H."/>
            <person name="Bjorklund H.V."/>
        </authorList>
    </citation>
    <scope>NUCLEOTIDE SEQUENCE [GENOMIC RNA]</scope>
    <source>
        <strain>8401-H</strain>
    </source>
</reference>
<reference key="2">
    <citation type="journal article" date="2005" name="Virus Res.">
        <title>Complete nucleotide sequence of the hirame rhabdovirus, a pathogen of marine fish.</title>
        <authorList>
            <person name="Kim D.H."/>
            <person name="Oh H.K."/>
            <person name="Eou J.I."/>
            <person name="Seo H.J."/>
            <person name="Kim S.K."/>
            <person name="Oh M.J."/>
            <person name="Nam S.W."/>
            <person name="Choi T.J."/>
        </authorList>
    </citation>
    <scope>NUCLEOTIDE SEQUENCE [GENOMIC RNA]</scope>
</reference>
<comment type="function">
    <text>Plays an essential role for the viral pathogenicity.</text>
</comment>
<comment type="similarity">
    <text evidence="1">Belongs to the novirhabdovirus NV protein family.</text>
</comment>
<evidence type="ECO:0000305" key="1"/>
<proteinExistence type="inferred from homology"/>
<name>NV_HIRRV</name>
<accession>Q82080</accession>
<sequence>MNSKTPSTDIAALKDLLRYKVTVARHGFLFDDGKIVWSEDGDEAWNRLLVVVGALRSSNRMSQALFMDMSITKGDGYLLFSDLQGTNNLQYRTPKFRQYLFPVDEFLPLPR</sequence>
<feature type="chain" id="PRO_0000299211" description="Non-virion protein">
    <location>
        <begin position="1"/>
        <end position="111"/>
    </location>
</feature>
<organismHost>
    <name type="scientific">Acanthopagrus schlegelii</name>
    <name type="common">Black porgy</name>
    <dbReference type="NCBI Taxonomy" id="72011"/>
</organismHost>
<organismHost>
    <name type="scientific">Paralichthys olivaceus</name>
    <name type="common">Bastard halibut</name>
    <name type="synonym">Hippoglossus olivaceus</name>
    <dbReference type="NCBI Taxonomy" id="8255"/>
</organismHost>
<organismHost>
    <name type="scientific">Plecoglossus altivelis</name>
    <name type="common">Ayu</name>
    <dbReference type="NCBI Taxonomy" id="61084"/>
</organismHost>
<organismHost>
    <name type="scientific">Sebastes inermis</name>
    <name type="common">Dark-banded rockfish</name>
    <dbReference type="NCBI Taxonomy" id="160818"/>
</organismHost>
<dbReference type="EMBL" id="U47847">
    <property type="protein sequence ID" value="AAC56573.1"/>
    <property type="molecule type" value="Genomic_RNA"/>
</dbReference>
<dbReference type="EMBL" id="AF104985">
    <property type="protein sequence ID" value="AAQ73461.1"/>
    <property type="molecule type" value="Genomic_RNA"/>
</dbReference>
<dbReference type="KEGG" id="vg:2559536"/>
<dbReference type="Proteomes" id="UP000008118">
    <property type="component" value="Segment"/>
</dbReference>
<dbReference type="InterPro" id="IPR003490">
    <property type="entry name" value="Rhabd_NV"/>
</dbReference>
<dbReference type="Pfam" id="PF02484">
    <property type="entry name" value="Rhabdo_NV"/>
    <property type="match status" value="1"/>
</dbReference>
<organism>
    <name type="scientific">Hirame rhabdovirus (strain Korea/CA 9703/1997)</name>
    <name type="common">HIRRV</name>
    <dbReference type="NCBI Taxonomy" id="453457"/>
    <lineage>
        <taxon>Viruses</taxon>
        <taxon>Riboviria</taxon>
        <taxon>Orthornavirae</taxon>
        <taxon>Negarnaviricota</taxon>
        <taxon>Haploviricotina</taxon>
        <taxon>Monjiviricetes</taxon>
        <taxon>Mononegavirales</taxon>
        <taxon>Rhabdoviridae</taxon>
        <taxon>Gammarhabdovirinae</taxon>
        <taxon>Novirhabdovirus</taxon>
        <taxon>Novirhabdovirus hirame</taxon>
    </lineage>
</organism>
<gene>
    <name type="primary">NV</name>
</gene>